<gene>
    <name type="ordered locus">GTNG_1302</name>
</gene>
<sequence>MIDQYFQKINERLKLVLKHEKDNLKKAAHAVSKAVQNGGIIQLFGCGHSHIMAEEVFYRAGGLVPVKPIFVEPLMLHEGAVRSSMLERMNDFAPSFIDREDIRSEDVFFILSTSGRNPVPIDVALAAKAKGAYTIAITSLEYSKSQPSRHKSGRLLYEVVDLVIDNHSVKGDAILTHQNVSVPFAPTSTVVGSAILNAVLAEAIALMAENGVEPPVFLSGNIEGADEHNRRWIEKYKERIPVLIEGCQP</sequence>
<proteinExistence type="inferred from homology"/>
<dbReference type="EMBL" id="CP000557">
    <property type="protein sequence ID" value="ABO66672.1"/>
    <property type="molecule type" value="Genomic_DNA"/>
</dbReference>
<dbReference type="RefSeq" id="WP_011887261.1">
    <property type="nucleotide sequence ID" value="NC_009328.1"/>
</dbReference>
<dbReference type="SMR" id="A4IMW8"/>
<dbReference type="GeneID" id="87621116"/>
<dbReference type="KEGG" id="gtn:GTNG_1302"/>
<dbReference type="eggNOG" id="COG4821">
    <property type="taxonomic scope" value="Bacteria"/>
</dbReference>
<dbReference type="HOGENOM" id="CLU_089975_0_0_9"/>
<dbReference type="Proteomes" id="UP000001578">
    <property type="component" value="Chromosome"/>
</dbReference>
<dbReference type="GO" id="GO:0097367">
    <property type="term" value="F:carbohydrate derivative binding"/>
    <property type="evidence" value="ECO:0007669"/>
    <property type="project" value="InterPro"/>
</dbReference>
<dbReference type="GO" id="GO:1901135">
    <property type="term" value="P:carbohydrate derivative metabolic process"/>
    <property type="evidence" value="ECO:0007669"/>
    <property type="project" value="InterPro"/>
</dbReference>
<dbReference type="CDD" id="cd05013">
    <property type="entry name" value="SIS_RpiR"/>
    <property type="match status" value="1"/>
</dbReference>
<dbReference type="Gene3D" id="3.40.50.10490">
    <property type="entry name" value="Glucose-6-phosphate isomerase like protein, domain 1"/>
    <property type="match status" value="1"/>
</dbReference>
<dbReference type="HAMAP" id="MF_01240">
    <property type="entry name" value="UPF0309"/>
    <property type="match status" value="1"/>
</dbReference>
<dbReference type="InterPro" id="IPR035472">
    <property type="entry name" value="RpiR-like_SIS"/>
</dbReference>
<dbReference type="InterPro" id="IPR001347">
    <property type="entry name" value="SIS_dom"/>
</dbReference>
<dbReference type="InterPro" id="IPR046348">
    <property type="entry name" value="SIS_dom_sf"/>
</dbReference>
<dbReference type="InterPro" id="IPR050099">
    <property type="entry name" value="SIS_GmhA/DiaA_subfam"/>
</dbReference>
<dbReference type="InterPro" id="IPR022951">
    <property type="entry name" value="UPF0309"/>
</dbReference>
<dbReference type="NCBIfam" id="NF002805">
    <property type="entry name" value="PRK02947.1"/>
    <property type="match status" value="1"/>
</dbReference>
<dbReference type="PANTHER" id="PTHR30390:SF7">
    <property type="entry name" value="PHOSPHOHEPTOSE ISOMERASE"/>
    <property type="match status" value="1"/>
</dbReference>
<dbReference type="PANTHER" id="PTHR30390">
    <property type="entry name" value="SEDOHEPTULOSE 7-PHOSPHATE ISOMERASE / DNAA INITIATOR-ASSOCIATING FACTOR FOR REPLICATION INITIATION"/>
    <property type="match status" value="1"/>
</dbReference>
<dbReference type="Pfam" id="PF13580">
    <property type="entry name" value="SIS_2"/>
    <property type="match status" value="1"/>
</dbReference>
<dbReference type="SUPFAM" id="SSF53697">
    <property type="entry name" value="SIS domain"/>
    <property type="match status" value="1"/>
</dbReference>
<dbReference type="PROSITE" id="PS51464">
    <property type="entry name" value="SIS"/>
    <property type="match status" value="1"/>
</dbReference>
<evidence type="ECO:0000255" key="1">
    <source>
        <dbReference type="HAMAP-Rule" id="MF_01240"/>
    </source>
</evidence>
<reference key="1">
    <citation type="journal article" date="2007" name="Proc. Natl. Acad. Sci. U.S.A.">
        <title>Genome and proteome of long-chain alkane degrading Geobacillus thermodenitrificans NG80-2 isolated from a deep-subsurface oil reservoir.</title>
        <authorList>
            <person name="Feng L."/>
            <person name="Wang W."/>
            <person name="Cheng J."/>
            <person name="Ren Y."/>
            <person name="Zhao G."/>
            <person name="Gao C."/>
            <person name="Tang Y."/>
            <person name="Liu X."/>
            <person name="Han W."/>
            <person name="Peng X."/>
            <person name="Liu R."/>
            <person name="Wang L."/>
        </authorList>
    </citation>
    <scope>NUCLEOTIDE SEQUENCE [LARGE SCALE GENOMIC DNA]</scope>
    <source>
        <strain>NG80-2</strain>
    </source>
</reference>
<name>Y1302_GEOTN</name>
<comment type="similarity">
    <text evidence="1">Belongs to the UPF0309 family.</text>
</comment>
<accession>A4IMW8</accession>
<organism>
    <name type="scientific">Geobacillus thermodenitrificans (strain NG80-2)</name>
    <dbReference type="NCBI Taxonomy" id="420246"/>
    <lineage>
        <taxon>Bacteria</taxon>
        <taxon>Bacillati</taxon>
        <taxon>Bacillota</taxon>
        <taxon>Bacilli</taxon>
        <taxon>Bacillales</taxon>
        <taxon>Anoxybacillaceae</taxon>
        <taxon>Geobacillus</taxon>
    </lineage>
</organism>
<protein>
    <recommendedName>
        <fullName evidence="1">UPF0309 protein GTNG_1302</fullName>
    </recommendedName>
</protein>
<feature type="chain" id="PRO_1000066945" description="UPF0309 protein GTNG_1302">
    <location>
        <begin position="1"/>
        <end position="249"/>
    </location>
</feature>
<feature type="domain" description="SIS" evidence="1">
    <location>
        <begin position="31"/>
        <end position="214"/>
    </location>
</feature>